<evidence type="ECO:0000255" key="1">
    <source>
        <dbReference type="HAMAP-Rule" id="MF_01371"/>
    </source>
</evidence>
<evidence type="ECO:0000305" key="2"/>
<keyword id="KW-0687">Ribonucleoprotein</keyword>
<keyword id="KW-0689">Ribosomal protein</keyword>
<comment type="subunit">
    <text evidence="1">Part of the 50S ribosomal subunit.</text>
</comment>
<comment type="similarity">
    <text evidence="1">Belongs to the universal ribosomal protein uL30 family.</text>
</comment>
<accession>B2UYC8</accession>
<proteinExistence type="inferred from homology"/>
<reference key="1">
    <citation type="submission" date="2008-05" db="EMBL/GenBank/DDBJ databases">
        <title>Complete genome sequence of Clostridium botulinum E3 str. Alaska E43.</title>
        <authorList>
            <person name="Brinkac L.M."/>
            <person name="Brown J.L."/>
            <person name="Bruce D."/>
            <person name="Detter C."/>
            <person name="Munk C."/>
            <person name="Smith L.A."/>
            <person name="Smith T.J."/>
            <person name="Sutton G."/>
            <person name="Brettin T.S."/>
        </authorList>
    </citation>
    <scope>NUCLEOTIDE SEQUENCE [LARGE SCALE GENOMIC DNA]</scope>
    <source>
        <strain>Alaska E43 / Type E3</strain>
    </source>
</reference>
<name>RL30_CLOBA</name>
<dbReference type="EMBL" id="CP001078">
    <property type="protein sequence ID" value="ACD52859.1"/>
    <property type="molecule type" value="Genomic_DNA"/>
</dbReference>
<dbReference type="RefSeq" id="WP_003372301.1">
    <property type="nucleotide sequence ID" value="NC_010723.1"/>
</dbReference>
<dbReference type="SMR" id="B2UYC8"/>
<dbReference type="KEGG" id="cbt:CLH_0255"/>
<dbReference type="HOGENOM" id="CLU_131047_2_1_9"/>
<dbReference type="GO" id="GO:0022625">
    <property type="term" value="C:cytosolic large ribosomal subunit"/>
    <property type="evidence" value="ECO:0007669"/>
    <property type="project" value="TreeGrafter"/>
</dbReference>
<dbReference type="GO" id="GO:0003735">
    <property type="term" value="F:structural constituent of ribosome"/>
    <property type="evidence" value="ECO:0007669"/>
    <property type="project" value="InterPro"/>
</dbReference>
<dbReference type="GO" id="GO:0006412">
    <property type="term" value="P:translation"/>
    <property type="evidence" value="ECO:0007669"/>
    <property type="project" value="UniProtKB-UniRule"/>
</dbReference>
<dbReference type="CDD" id="cd01658">
    <property type="entry name" value="Ribosomal_L30"/>
    <property type="match status" value="1"/>
</dbReference>
<dbReference type="FunFam" id="3.30.1390.20:FF:000001">
    <property type="entry name" value="50S ribosomal protein L30"/>
    <property type="match status" value="1"/>
</dbReference>
<dbReference type="Gene3D" id="3.30.1390.20">
    <property type="entry name" value="Ribosomal protein L30, ferredoxin-like fold domain"/>
    <property type="match status" value="1"/>
</dbReference>
<dbReference type="HAMAP" id="MF_01371_B">
    <property type="entry name" value="Ribosomal_uL30_B"/>
    <property type="match status" value="1"/>
</dbReference>
<dbReference type="InterPro" id="IPR036919">
    <property type="entry name" value="Ribo_uL30_ferredoxin-like_sf"/>
</dbReference>
<dbReference type="InterPro" id="IPR005996">
    <property type="entry name" value="Ribosomal_uL30_bac-type"/>
</dbReference>
<dbReference type="InterPro" id="IPR016082">
    <property type="entry name" value="Ribosomal_uL30_ferredoxin-like"/>
</dbReference>
<dbReference type="NCBIfam" id="TIGR01308">
    <property type="entry name" value="rpmD_bact"/>
    <property type="match status" value="1"/>
</dbReference>
<dbReference type="PANTHER" id="PTHR15892:SF2">
    <property type="entry name" value="LARGE RIBOSOMAL SUBUNIT PROTEIN UL30M"/>
    <property type="match status" value="1"/>
</dbReference>
<dbReference type="PANTHER" id="PTHR15892">
    <property type="entry name" value="MITOCHONDRIAL RIBOSOMAL PROTEIN L30"/>
    <property type="match status" value="1"/>
</dbReference>
<dbReference type="Pfam" id="PF00327">
    <property type="entry name" value="Ribosomal_L30"/>
    <property type="match status" value="1"/>
</dbReference>
<dbReference type="PIRSF" id="PIRSF002211">
    <property type="entry name" value="Ribosomal_L30_bac-type"/>
    <property type="match status" value="1"/>
</dbReference>
<dbReference type="SUPFAM" id="SSF55129">
    <property type="entry name" value="Ribosomal protein L30p/L7e"/>
    <property type="match status" value="1"/>
</dbReference>
<protein>
    <recommendedName>
        <fullName evidence="1">Large ribosomal subunit protein uL30</fullName>
    </recommendedName>
    <alternativeName>
        <fullName evidence="2">50S ribosomal protein L30</fullName>
    </alternativeName>
</protein>
<organism>
    <name type="scientific">Clostridium botulinum (strain Alaska E43 / Type E3)</name>
    <dbReference type="NCBI Taxonomy" id="508767"/>
    <lineage>
        <taxon>Bacteria</taxon>
        <taxon>Bacillati</taxon>
        <taxon>Bacillota</taxon>
        <taxon>Clostridia</taxon>
        <taxon>Eubacteriales</taxon>
        <taxon>Clostridiaceae</taxon>
        <taxon>Clostridium</taxon>
    </lineage>
</organism>
<gene>
    <name evidence="1" type="primary">rpmD</name>
    <name type="ordered locus">CLH_0255</name>
</gene>
<feature type="chain" id="PRO_1000144664" description="Large ribosomal subunit protein uL30">
    <location>
        <begin position="1"/>
        <end position="59"/>
    </location>
</feature>
<sequence length="59" mass="6638">MAKLKITLVKSLIGRKKEHIATANALGLRKIRATVEHEGTPQIKGMLKKIDYLLKVEEI</sequence>